<evidence type="ECO:0000255" key="1"/>
<evidence type="ECO:0000256" key="2">
    <source>
        <dbReference type="SAM" id="MobiDB-lite"/>
    </source>
</evidence>
<evidence type="ECO:0000269" key="3">
    <source>
    </source>
</evidence>
<evidence type="ECO:0000305" key="4"/>
<evidence type="ECO:0000312" key="5">
    <source>
        <dbReference type="WormBase" id="C47C12.6a"/>
    </source>
</evidence>
<gene>
    <name evidence="5" type="primary">deg-1</name>
    <name evidence="5" type="ORF">C47C12.6</name>
</gene>
<name>DEG1_CAEEL</name>
<accession>P24585</accession>
<dbReference type="EMBL" id="L34414">
    <property type="protein sequence ID" value="AAA99524.1"/>
    <property type="molecule type" value="mRNA"/>
</dbReference>
<dbReference type="EMBL" id="FO080891">
    <property type="protein sequence ID" value="CCD67556.1"/>
    <property type="molecule type" value="Genomic_DNA"/>
</dbReference>
<dbReference type="EMBL" id="X53314">
    <property type="protein sequence ID" value="CAA37396.1"/>
    <property type="molecule type" value="mRNA"/>
</dbReference>
<dbReference type="PIR" id="T25652">
    <property type="entry name" value="T25652"/>
</dbReference>
<dbReference type="RefSeq" id="NP_509311.1">
    <molecule id="P24585-1"/>
    <property type="nucleotide sequence ID" value="NM_076910.5"/>
</dbReference>
<dbReference type="SMR" id="P24585"/>
<dbReference type="FunCoup" id="P24585">
    <property type="interactions" value="25"/>
</dbReference>
<dbReference type="STRING" id="6239.C47C12.6.3"/>
<dbReference type="TCDB" id="1.A.6.2.1">
    <property type="family name" value="the epithelial na(+) channel (enac) family"/>
</dbReference>
<dbReference type="GlyCosmos" id="P24585">
    <property type="glycosylation" value="7 sites, No reported glycans"/>
</dbReference>
<dbReference type="PaxDb" id="6239-C47C12.6.1"/>
<dbReference type="EnsemblMetazoa" id="C47C12.6a.1">
    <molecule id="P24585-1"/>
    <property type="protein sequence ID" value="C47C12.6a.1"/>
    <property type="gene ID" value="WBGene00000950"/>
</dbReference>
<dbReference type="EnsemblMetazoa" id="C47C12.6a.2">
    <molecule id="P24585-1"/>
    <property type="protein sequence ID" value="C47C12.6a.2"/>
    <property type="gene ID" value="WBGene00000950"/>
</dbReference>
<dbReference type="GeneID" id="181035"/>
<dbReference type="KEGG" id="cel:CELE_C47C12.6"/>
<dbReference type="UCSC" id="C47C12.6.3">
    <molecule id="P24585-1"/>
    <property type="organism name" value="c. elegans"/>
</dbReference>
<dbReference type="AGR" id="WB:WBGene00000950"/>
<dbReference type="CTD" id="181035"/>
<dbReference type="WormBase" id="C47C12.6a">
    <property type="protein sequence ID" value="CE24854"/>
    <property type="gene ID" value="WBGene00000950"/>
    <property type="gene designation" value="deg-1"/>
</dbReference>
<dbReference type="eggNOG" id="KOG4294">
    <property type="taxonomic scope" value="Eukaryota"/>
</dbReference>
<dbReference type="HOGENOM" id="CLU_017673_0_0_1"/>
<dbReference type="InParanoid" id="P24585"/>
<dbReference type="OMA" id="TPYCIGK"/>
<dbReference type="OrthoDB" id="6021021at2759"/>
<dbReference type="PhylomeDB" id="P24585"/>
<dbReference type="Reactome" id="R-CEL-2672351">
    <property type="pathway name" value="Stimuli-sensing channels"/>
</dbReference>
<dbReference type="Reactome" id="R-CEL-9730628">
    <property type="pathway name" value="Sensory perception of salty taste"/>
</dbReference>
<dbReference type="PRO" id="PR:P24585"/>
<dbReference type="Proteomes" id="UP000001940">
    <property type="component" value="Chromosome X"/>
</dbReference>
<dbReference type="Bgee" id="WBGene00000950">
    <property type="expression patterns" value="Expressed in embryo and 3 other cell types or tissues"/>
</dbReference>
<dbReference type="ExpressionAtlas" id="P24585">
    <property type="expression patterns" value="baseline and differential"/>
</dbReference>
<dbReference type="GO" id="GO:0005886">
    <property type="term" value="C:plasma membrane"/>
    <property type="evidence" value="ECO:0000318"/>
    <property type="project" value="GO_Central"/>
</dbReference>
<dbReference type="GO" id="GO:0015280">
    <property type="term" value="F:ligand-gated sodium channel activity"/>
    <property type="evidence" value="ECO:0000318"/>
    <property type="project" value="GO_Central"/>
</dbReference>
<dbReference type="GO" id="GO:0010447">
    <property type="term" value="P:response to acidic pH"/>
    <property type="evidence" value="ECO:0000316"/>
    <property type="project" value="WormBase"/>
</dbReference>
<dbReference type="GO" id="GO:0043200">
    <property type="term" value="P:response to amino acid"/>
    <property type="evidence" value="ECO:0000315"/>
    <property type="project" value="WormBase"/>
</dbReference>
<dbReference type="GO" id="GO:0035725">
    <property type="term" value="P:sodium ion transmembrane transport"/>
    <property type="evidence" value="ECO:0000318"/>
    <property type="project" value="GO_Central"/>
</dbReference>
<dbReference type="FunFam" id="1.10.287.770:FF:000001">
    <property type="entry name" value="Acid-sensing ion channel subunit 1"/>
    <property type="match status" value="1"/>
</dbReference>
<dbReference type="FunFam" id="2.60.470.10:FF:000004">
    <property type="entry name" value="Degenerin unc-8"/>
    <property type="match status" value="1"/>
</dbReference>
<dbReference type="Gene3D" id="2.60.470.10">
    <property type="entry name" value="Acid-sensing ion channels like domains"/>
    <property type="match status" value="1"/>
</dbReference>
<dbReference type="Gene3D" id="1.10.287.770">
    <property type="entry name" value="YojJ-like"/>
    <property type="match status" value="1"/>
</dbReference>
<dbReference type="InterPro" id="IPR004726">
    <property type="entry name" value="Deg-1"/>
</dbReference>
<dbReference type="InterPro" id="IPR001873">
    <property type="entry name" value="ENaC"/>
</dbReference>
<dbReference type="InterPro" id="IPR020903">
    <property type="entry name" value="ENaC_CS"/>
</dbReference>
<dbReference type="NCBIfam" id="TIGR00867">
    <property type="entry name" value="deg-1"/>
    <property type="match status" value="1"/>
</dbReference>
<dbReference type="PANTHER" id="PTHR11690">
    <property type="entry name" value="AMILORIDE-SENSITIVE SODIUM CHANNEL-RELATED"/>
    <property type="match status" value="1"/>
</dbReference>
<dbReference type="PANTHER" id="PTHR11690:SF276">
    <property type="entry name" value="DEGENERIN DEG-1"/>
    <property type="match status" value="1"/>
</dbReference>
<dbReference type="Pfam" id="PF00858">
    <property type="entry name" value="ASC"/>
    <property type="match status" value="1"/>
</dbReference>
<dbReference type="PRINTS" id="PR01078">
    <property type="entry name" value="AMINACHANNEL"/>
</dbReference>
<dbReference type="PROSITE" id="PS01206">
    <property type="entry name" value="ASC"/>
    <property type="match status" value="1"/>
</dbReference>
<protein>
    <recommendedName>
        <fullName>Degenerin deg-1</fullName>
    </recommendedName>
    <alternativeName>
        <fullName>Degeneration of certain neurons protein 1</fullName>
    </alternativeName>
</protein>
<comment type="function">
    <text>Probable sodium channel subunit. Required by a subset of neurons.</text>
</comment>
<comment type="subcellular location">
    <subcellularLocation>
        <location>Membrane</location>
        <topology>Multi-pass membrane protein</topology>
    </subcellularLocation>
</comment>
<comment type="alternative products">
    <event type="alternative splicing"/>
    <isoform>
        <id>P24585-1</id>
        <name>Long</name>
        <sequence type="displayed"/>
    </isoform>
    <isoform>
        <id>P24585-2</id>
        <name>Short</name>
        <sequence type="described" ref="VSP_006198"/>
    </isoform>
</comment>
<comment type="similarity">
    <text evidence="4">Belongs to the amiloride-sensitive sodium channel (TC 1.A.6) family.</text>
</comment>
<reference key="1">
    <citation type="journal article" date="1995" name="Curr. Biol.">
        <title>Regulation of Caenorhabditis elegans degenerin proteins by a putative extracellular domain.</title>
        <authorList>
            <person name="Garcia-Anoveros J."/>
            <person name="Ma C."/>
            <person name="Chalfie M."/>
        </authorList>
    </citation>
    <scope>NUCLEOTIDE SEQUENCE [MRNA]</scope>
    <scope>ALTERNATIVE SPLICING</scope>
    <scope>MUTAGENESIS OF ALA-393; ALA-707; GLY-710 AND SER-720</scope>
    <source>
        <strain>Bristol N2</strain>
    </source>
</reference>
<reference key="2">
    <citation type="journal article" date="1998" name="Science">
        <title>Genome sequence of the nematode C. elegans: a platform for investigating biology.</title>
        <authorList>
            <consortium name="The C. elegans sequencing consortium"/>
        </authorList>
    </citation>
    <scope>NUCLEOTIDE SEQUENCE [LARGE SCALE GENOMIC DNA]</scope>
    <source>
        <strain>Bristol N2</strain>
    </source>
</reference>
<reference key="3">
    <citation type="journal article" date="1990" name="Nature">
        <title>The identification and suppression of inherited neurodegeneration in Caenorhabditis elegans.</title>
        <authorList>
            <person name="Chalfie M."/>
            <person name="Wolinsky E."/>
        </authorList>
    </citation>
    <scope>NUCLEOTIDE SEQUENCE [MRNA] OF 485-778 (ISOFORM LONG)</scope>
    <source>
        <strain>Bristol N2</strain>
    </source>
</reference>
<organism>
    <name type="scientific">Caenorhabditis elegans</name>
    <dbReference type="NCBI Taxonomy" id="6239"/>
    <lineage>
        <taxon>Eukaryota</taxon>
        <taxon>Metazoa</taxon>
        <taxon>Ecdysozoa</taxon>
        <taxon>Nematoda</taxon>
        <taxon>Chromadorea</taxon>
        <taxon>Rhabditida</taxon>
        <taxon>Rhabditina</taxon>
        <taxon>Rhabditomorpha</taxon>
        <taxon>Rhabditoidea</taxon>
        <taxon>Rhabditidae</taxon>
        <taxon>Peloderinae</taxon>
        <taxon>Caenorhabditis</taxon>
    </lineage>
</organism>
<sequence>MSNHHSKTKKTSMLGREDYIYSHDITNKNKKEKLNGASKNNDYNQDDDDETMKSKMMDFCDKTTAHGAKRVLIARNSFSKLMWGLIIFSFLLMFAYQASKLIFKFSAHEKITDISLKFDDVEFPAITFCNLNPYKKSLVMMVPSIRDTMDVYDNAKTHSKSEGEKKKPKVSRKQHSDASQQMVRELFAKEIEEGMVELKKSNKTLQSQNKSGRRRSQRSIENRRYEAIEAHCKCVGNIGMECIRFESPPRDPSSKCICTYDRDMEVAWPCFNISVWYDHECPLCHDDGYCESTLPSGTTSSDKWPCMCRNRGDTSERDDTPYCIGKAGVGKIEIRKLWLENNMTTTSTTTTTTTTPPPTTTSTTTTTTTTPPPTTTARPNQRAIVSNPETIKAMGFQGMTDGVAMLTRAKENLMFTMAALSDKQRIALSQSKHEFIEMCSFNGKECDIDEDFRLHVDPEFGNCFTFNYDVNNNYTSSRAGPMYGIRVLLFVNTSDYMSTSESSGVRLAIHPPTEYPFPDTFGYSAPVGFASSFGIKKKVMQRLPAPYGECVETKKVVDRNYIYAGYDYHPEGCHRSCFQNGLIDDCSCGDPRFPVPEGYRHCSAFNATARTCLEKNIGSVGDFHHITQKMDKCVCKQSCEEIIHEVTFSCSKWPSGATDLGDCDGMTESECEQYYRLNAAMIEVFYEQLNYELLQESEAYGLVNLIADFGGHLGLWLGFSVITVMEVCVLLVDMISLFFKSRHEEKLLRQSTKRKDVPEDKRQITVGSGRKSDAFVSI</sequence>
<proteinExistence type="evidence at protein level"/>
<keyword id="KW-0025">Alternative splicing</keyword>
<keyword id="KW-0325">Glycoprotein</keyword>
<keyword id="KW-0407">Ion channel</keyword>
<keyword id="KW-0406">Ion transport</keyword>
<keyword id="KW-0472">Membrane</keyword>
<keyword id="KW-0523">Neurodegeneration</keyword>
<keyword id="KW-1185">Reference proteome</keyword>
<keyword id="KW-0915">Sodium</keyword>
<keyword id="KW-0894">Sodium channel</keyword>
<keyword id="KW-0739">Sodium transport</keyword>
<keyword id="KW-0812">Transmembrane</keyword>
<keyword id="KW-1133">Transmembrane helix</keyword>
<keyword id="KW-0813">Transport</keyword>
<feature type="chain" id="PRO_0000181284" description="Degenerin deg-1">
    <location>
        <begin position="1"/>
        <end position="778"/>
    </location>
</feature>
<feature type="topological domain" description="Cytoplasmic" evidence="1">
    <location>
        <begin position="1"/>
        <end position="82"/>
    </location>
</feature>
<feature type="transmembrane region" description="Helical" evidence="1">
    <location>
        <begin position="83"/>
        <end position="103"/>
    </location>
</feature>
<feature type="topological domain" description="Extracellular" evidence="1">
    <location>
        <begin position="104"/>
        <end position="711"/>
    </location>
</feature>
<feature type="transmembrane region" description="Helical" evidence="1">
    <location>
        <begin position="712"/>
        <end position="732"/>
    </location>
</feature>
<feature type="topological domain" description="Cytoplasmic" evidence="1">
    <location>
        <begin position="733"/>
        <end position="778"/>
    </location>
</feature>
<feature type="region of interest" description="Disordered" evidence="2">
    <location>
        <begin position="154"/>
        <end position="180"/>
    </location>
</feature>
<feature type="region of interest" description="Disordered" evidence="2">
    <location>
        <begin position="201"/>
        <end position="220"/>
    </location>
</feature>
<feature type="region of interest" description="Disordered" evidence="2">
    <location>
        <begin position="346"/>
        <end position="380"/>
    </location>
</feature>
<feature type="compositionally biased region" description="Basic and acidic residues" evidence="2">
    <location>
        <begin position="154"/>
        <end position="165"/>
    </location>
</feature>
<feature type="compositionally biased region" description="Low complexity" evidence="2">
    <location>
        <begin position="346"/>
        <end position="369"/>
    </location>
</feature>
<feature type="glycosylation site" description="N-linked (GlcNAc...) asparagine" evidence="1">
    <location>
        <position position="202"/>
    </location>
</feature>
<feature type="glycosylation site" description="N-linked (GlcNAc...) asparagine" evidence="1">
    <location>
        <position position="209"/>
    </location>
</feature>
<feature type="glycosylation site" description="N-linked (GlcNAc...) asparagine" evidence="1">
    <location>
        <position position="272"/>
    </location>
</feature>
<feature type="glycosylation site" description="N-linked (GlcNAc...) asparagine" evidence="1">
    <location>
        <position position="342"/>
    </location>
</feature>
<feature type="glycosylation site" description="N-linked (GlcNAc...) asparagine" evidence="1">
    <location>
        <position position="473"/>
    </location>
</feature>
<feature type="glycosylation site" description="N-linked (GlcNAc...) asparagine" evidence="1">
    <location>
        <position position="492"/>
    </location>
</feature>
<feature type="glycosylation site" description="N-linked (GlcNAc...) asparagine" evidence="1">
    <location>
        <position position="606"/>
    </location>
</feature>
<feature type="splice variant" id="VSP_006198" description="In isoform Short." evidence="4">
    <location>
        <begin position="660"/>
        <end position="683"/>
    </location>
</feature>
<feature type="mutagenesis site" description="In deg-1(u506); degeneration." evidence="3">
    <original>A</original>
    <variation>T</variation>
    <location>
        <position position="393"/>
    </location>
</feature>
<feature type="mutagenesis site" description="In deg-1(u38) and deg-1(u529); degeneration." evidence="3">
    <original>A</original>
    <variation>V</variation>
    <location>
        <position position="707"/>
    </location>
</feature>
<feature type="mutagenesis site" description="In deg-1(u512); prevents degeneration." evidence="3">
    <original>G</original>
    <variation>E</variation>
    <location>
        <position position="710"/>
    </location>
</feature>
<feature type="mutagenesis site" description="In deg-1(u679); prevents degeneration." evidence="3">
    <original>G</original>
    <variation>R</variation>
    <location>
        <position position="710"/>
    </location>
</feature>
<feature type="mutagenesis site" description="In deg-1(u558); prevents degeneration." evidence="3">
    <original>S</original>
    <variation>F</variation>
    <location>
        <position position="720"/>
    </location>
</feature>